<proteinExistence type="inferred from homology"/>
<feature type="signal peptide" evidence="1">
    <location>
        <begin position="1"/>
        <end position="23"/>
    </location>
</feature>
<feature type="chain" id="PRO_0000013894" description="Uncharacterized protein YfjT">
    <location>
        <begin position="24"/>
        <end position="155"/>
    </location>
</feature>
<feature type="sequence conflict" description="In Ref. 3; AAA35359." evidence="2" ref="3">
    <original>G</original>
    <variation>E</variation>
    <location>
        <position position="26"/>
    </location>
</feature>
<feature type="sequence conflict" description="In Ref. 3; AAA35359." evidence="2" ref="3">
    <original>Q</original>
    <variation>L</variation>
    <location>
        <position position="29"/>
    </location>
</feature>
<feature type="sequence conflict" description="In Ref. 3; AAA35359." evidence="2" ref="3">
    <original>H</original>
    <variation>N</variation>
    <location>
        <position position="65"/>
    </location>
</feature>
<dbReference type="EMBL" id="U36840">
    <property type="protein sequence ID" value="AAA79805.1"/>
    <property type="molecule type" value="Genomic_DNA"/>
</dbReference>
<dbReference type="EMBL" id="U00096">
    <property type="protein sequence ID" value="AAC75685.1"/>
    <property type="molecule type" value="Genomic_DNA"/>
</dbReference>
<dbReference type="EMBL" id="AP009048">
    <property type="protein sequence ID" value="BAE76772.1"/>
    <property type="molecule type" value="Genomic_DNA"/>
</dbReference>
<dbReference type="EMBL" id="M59434">
    <property type="protein sequence ID" value="AAA35359.1"/>
    <property type="status" value="ALT_INIT"/>
    <property type="molecule type" value="Genomic_DNA"/>
</dbReference>
<dbReference type="PIR" id="T08648">
    <property type="entry name" value="T08648"/>
</dbReference>
<dbReference type="RefSeq" id="NP_417125.1">
    <property type="nucleotide sequence ID" value="NC_000913.3"/>
</dbReference>
<dbReference type="RefSeq" id="WP_000702495.1">
    <property type="nucleotide sequence ID" value="NZ_LN832404.1"/>
</dbReference>
<dbReference type="BioGRID" id="4260629">
    <property type="interactions" value="12"/>
</dbReference>
<dbReference type="FunCoup" id="P52135">
    <property type="interactions" value="77"/>
</dbReference>
<dbReference type="STRING" id="511145.b2637"/>
<dbReference type="PaxDb" id="511145-b2637"/>
<dbReference type="EnsemblBacteria" id="AAC75685">
    <property type="protein sequence ID" value="AAC75685"/>
    <property type="gene ID" value="b2637"/>
</dbReference>
<dbReference type="GeneID" id="947616"/>
<dbReference type="KEGG" id="ecj:JW2618"/>
<dbReference type="KEGG" id="eco:b2637"/>
<dbReference type="KEGG" id="ecoc:C3026_14585"/>
<dbReference type="PATRIC" id="fig|511145.12.peg.2731"/>
<dbReference type="EchoBASE" id="EB2998"/>
<dbReference type="eggNOG" id="ENOG5030VQ4">
    <property type="taxonomic scope" value="Bacteria"/>
</dbReference>
<dbReference type="HOGENOM" id="CLU_141565_0_0_6"/>
<dbReference type="InParanoid" id="P52135"/>
<dbReference type="OMA" id="AQAIPNM"/>
<dbReference type="OrthoDB" id="6688707at2"/>
<dbReference type="BioCyc" id="EcoCyc:G7372-MONOMER"/>
<dbReference type="PRO" id="PR:P52135"/>
<dbReference type="Proteomes" id="UP000000625">
    <property type="component" value="Chromosome"/>
</dbReference>
<organism>
    <name type="scientific">Escherichia coli (strain K12)</name>
    <dbReference type="NCBI Taxonomy" id="83333"/>
    <lineage>
        <taxon>Bacteria</taxon>
        <taxon>Pseudomonadati</taxon>
        <taxon>Pseudomonadota</taxon>
        <taxon>Gammaproteobacteria</taxon>
        <taxon>Enterobacterales</taxon>
        <taxon>Enterobacteriaceae</taxon>
        <taxon>Escherichia</taxon>
    </lineage>
</organism>
<keyword id="KW-1185">Reference proteome</keyword>
<keyword id="KW-0732">Signal</keyword>
<accession>P52135</accession>
<accession>Q2MAD4</accession>
<reference key="1">
    <citation type="journal article" date="1997" name="Science">
        <title>The complete genome sequence of Escherichia coli K-12.</title>
        <authorList>
            <person name="Blattner F.R."/>
            <person name="Plunkett G. III"/>
            <person name="Bloch C.A."/>
            <person name="Perna N.T."/>
            <person name="Burland V."/>
            <person name="Riley M."/>
            <person name="Collado-Vides J."/>
            <person name="Glasner J.D."/>
            <person name="Rode C.K."/>
            <person name="Mayhew G.F."/>
            <person name="Gregor J."/>
            <person name="Davis N.W."/>
            <person name="Kirkpatrick H.A."/>
            <person name="Goeden M.A."/>
            <person name="Rose D.J."/>
            <person name="Mau B."/>
            <person name="Shao Y."/>
        </authorList>
    </citation>
    <scope>NUCLEOTIDE SEQUENCE [LARGE SCALE GENOMIC DNA]</scope>
    <source>
        <strain>K12 / MG1655 / ATCC 47076</strain>
    </source>
</reference>
<reference key="2">
    <citation type="journal article" date="2006" name="Mol. Syst. Biol.">
        <title>Highly accurate genome sequences of Escherichia coli K-12 strains MG1655 and W3110.</title>
        <authorList>
            <person name="Hayashi K."/>
            <person name="Morooka N."/>
            <person name="Yamamoto Y."/>
            <person name="Fujita K."/>
            <person name="Isono K."/>
            <person name="Choi S."/>
            <person name="Ohtsubo E."/>
            <person name="Baba T."/>
            <person name="Wanner B.L."/>
            <person name="Mori H."/>
            <person name="Horiuchi T."/>
        </authorList>
    </citation>
    <scope>NUCLEOTIDE SEQUENCE [LARGE SCALE GENOMIC DNA]</scope>
    <source>
        <strain>K12 / W3110 / ATCC 27325 / DSM 5911</strain>
    </source>
</reference>
<reference key="3">
    <citation type="journal article" date="1991" name="Virology">
        <title>Analysis of complex mutations induced in cells by herpes simplex virus type-1.</title>
        <authorList>
            <person name="Hwang C.B.C."/>
            <person name="Shillitoe E.J."/>
        </authorList>
    </citation>
    <scope>NUCLEOTIDE SEQUENCE [GENOMIC DNA] OF 14-113</scope>
</reference>
<name>YFJT_ECOLI</name>
<evidence type="ECO:0000255" key="1"/>
<evidence type="ECO:0000305" key="2"/>
<sequence>MKIRSLSRFVLASTMFASFTASAVPGLWQQGYGQGNAEYSVTDASGKMFTINCTGNPDQNGIYQHSVFLILAGDKTVSSHDDSTGITVVMDHKQYAIPSTLGWRNGDNAWFSFIMDIRKARQFDVYVNDQKVGSFNPDVRNAQKVLPTLADCTND</sequence>
<protein>
    <recommendedName>
        <fullName>Uncharacterized protein YfjT</fullName>
    </recommendedName>
</protein>
<gene>
    <name type="primary">yfjT</name>
    <name type="ordered locus">b2637</name>
    <name type="ordered locus">JW2618</name>
</gene>
<comment type="similarity">
    <text evidence="2">To E.coli YkfB.</text>
</comment>
<comment type="caution">
    <text evidence="2">PubMed:1849680 sequence is supposed to originate from Cercopithecus aethiops, but this is clearly a case of bacterial contamination from E.coli.</text>
</comment>
<comment type="sequence caution" evidence="2">
    <conflict type="erroneous initiation">
        <sequence resource="EMBL-CDS" id="AAA35359"/>
    </conflict>
</comment>